<comment type="function">
    <text evidence="1">Promotes RNA polymerase assembly. Latches the N- and C-terminal regions of the beta' subunit thereby facilitating its interaction with the beta and alpha subunits.</text>
</comment>
<comment type="catalytic activity">
    <reaction evidence="1">
        <text>RNA(n) + a ribonucleoside 5'-triphosphate = RNA(n+1) + diphosphate</text>
        <dbReference type="Rhea" id="RHEA:21248"/>
        <dbReference type="Rhea" id="RHEA-COMP:14527"/>
        <dbReference type="Rhea" id="RHEA-COMP:17342"/>
        <dbReference type="ChEBI" id="CHEBI:33019"/>
        <dbReference type="ChEBI" id="CHEBI:61557"/>
        <dbReference type="ChEBI" id="CHEBI:140395"/>
        <dbReference type="EC" id="2.7.7.6"/>
    </reaction>
</comment>
<comment type="subunit">
    <text evidence="1">The RNAP catalytic core consists of 2 alpha, 1 beta, 1 beta' and 1 omega subunit. When a sigma factor is associated with the core the holoenzyme is formed, which can initiate transcription.</text>
</comment>
<comment type="similarity">
    <text evidence="1">Belongs to the RNA polymerase subunit omega family.</text>
</comment>
<gene>
    <name evidence="1" type="primary">rpoZ</name>
    <name type="ordered locus">Pden_1401</name>
</gene>
<keyword id="KW-0240">DNA-directed RNA polymerase</keyword>
<keyword id="KW-0548">Nucleotidyltransferase</keyword>
<keyword id="KW-1185">Reference proteome</keyword>
<keyword id="KW-0804">Transcription</keyword>
<keyword id="KW-0808">Transferase</keyword>
<dbReference type="EC" id="2.7.7.6" evidence="1"/>
<dbReference type="EMBL" id="CP000489">
    <property type="protein sequence ID" value="ABL69502.1"/>
    <property type="molecule type" value="Genomic_DNA"/>
</dbReference>
<dbReference type="RefSeq" id="WP_011747720.1">
    <property type="nucleotide sequence ID" value="NC_008686.1"/>
</dbReference>
<dbReference type="SMR" id="A1B1V8"/>
<dbReference type="STRING" id="318586.Pden_1401"/>
<dbReference type="EnsemblBacteria" id="ABL69502">
    <property type="protein sequence ID" value="ABL69502"/>
    <property type="gene ID" value="Pden_1401"/>
</dbReference>
<dbReference type="GeneID" id="93449891"/>
<dbReference type="KEGG" id="pde:Pden_1401"/>
<dbReference type="eggNOG" id="COG1758">
    <property type="taxonomic scope" value="Bacteria"/>
</dbReference>
<dbReference type="HOGENOM" id="CLU_125406_2_0_5"/>
<dbReference type="OrthoDB" id="9796300at2"/>
<dbReference type="Proteomes" id="UP000000361">
    <property type="component" value="Chromosome 1"/>
</dbReference>
<dbReference type="GO" id="GO:0000428">
    <property type="term" value="C:DNA-directed RNA polymerase complex"/>
    <property type="evidence" value="ECO:0007669"/>
    <property type="project" value="UniProtKB-KW"/>
</dbReference>
<dbReference type="GO" id="GO:0003677">
    <property type="term" value="F:DNA binding"/>
    <property type="evidence" value="ECO:0007669"/>
    <property type="project" value="UniProtKB-UniRule"/>
</dbReference>
<dbReference type="GO" id="GO:0003899">
    <property type="term" value="F:DNA-directed RNA polymerase activity"/>
    <property type="evidence" value="ECO:0007669"/>
    <property type="project" value="UniProtKB-UniRule"/>
</dbReference>
<dbReference type="GO" id="GO:0006351">
    <property type="term" value="P:DNA-templated transcription"/>
    <property type="evidence" value="ECO:0007669"/>
    <property type="project" value="UniProtKB-UniRule"/>
</dbReference>
<dbReference type="Gene3D" id="3.90.940.10">
    <property type="match status" value="1"/>
</dbReference>
<dbReference type="HAMAP" id="MF_00366">
    <property type="entry name" value="RNApol_bact_RpoZ"/>
    <property type="match status" value="1"/>
</dbReference>
<dbReference type="InterPro" id="IPR003716">
    <property type="entry name" value="DNA-dir_RNA_pol_omega"/>
</dbReference>
<dbReference type="InterPro" id="IPR006110">
    <property type="entry name" value="Pol_omega/Rpo6/RPB6"/>
</dbReference>
<dbReference type="InterPro" id="IPR036161">
    <property type="entry name" value="RPB6/omega-like_sf"/>
</dbReference>
<dbReference type="NCBIfam" id="TIGR00690">
    <property type="entry name" value="rpoZ"/>
    <property type="match status" value="1"/>
</dbReference>
<dbReference type="PANTHER" id="PTHR34476">
    <property type="entry name" value="DNA-DIRECTED RNA POLYMERASE SUBUNIT OMEGA"/>
    <property type="match status" value="1"/>
</dbReference>
<dbReference type="PANTHER" id="PTHR34476:SF1">
    <property type="entry name" value="DNA-DIRECTED RNA POLYMERASE SUBUNIT OMEGA"/>
    <property type="match status" value="1"/>
</dbReference>
<dbReference type="Pfam" id="PF01192">
    <property type="entry name" value="RNA_pol_Rpb6"/>
    <property type="match status" value="1"/>
</dbReference>
<dbReference type="SMART" id="SM01409">
    <property type="entry name" value="RNA_pol_Rpb6"/>
    <property type="match status" value="1"/>
</dbReference>
<dbReference type="SUPFAM" id="SSF63562">
    <property type="entry name" value="RPB6/omega subunit-like"/>
    <property type="match status" value="1"/>
</dbReference>
<reference key="1">
    <citation type="submission" date="2006-12" db="EMBL/GenBank/DDBJ databases">
        <title>Complete sequence of chromosome 1 of Paracoccus denitrificans PD1222.</title>
        <authorList>
            <person name="Copeland A."/>
            <person name="Lucas S."/>
            <person name="Lapidus A."/>
            <person name="Barry K."/>
            <person name="Detter J.C."/>
            <person name="Glavina del Rio T."/>
            <person name="Hammon N."/>
            <person name="Israni S."/>
            <person name="Dalin E."/>
            <person name="Tice H."/>
            <person name="Pitluck S."/>
            <person name="Munk A.C."/>
            <person name="Brettin T."/>
            <person name="Bruce D."/>
            <person name="Han C."/>
            <person name="Tapia R."/>
            <person name="Gilna P."/>
            <person name="Schmutz J."/>
            <person name="Larimer F."/>
            <person name="Land M."/>
            <person name="Hauser L."/>
            <person name="Kyrpides N."/>
            <person name="Lykidis A."/>
            <person name="Spiro S."/>
            <person name="Richardson D.J."/>
            <person name="Moir J.W.B."/>
            <person name="Ferguson S.J."/>
            <person name="van Spanning R.J.M."/>
            <person name="Richardson P."/>
        </authorList>
    </citation>
    <scope>NUCLEOTIDE SEQUENCE [LARGE SCALE GENOMIC DNA]</scope>
    <source>
        <strain>Pd 1222</strain>
    </source>
</reference>
<feature type="chain" id="PRO_1000005970" description="DNA-directed RNA polymerase subunit omega">
    <location>
        <begin position="1"/>
        <end position="118"/>
    </location>
</feature>
<organism>
    <name type="scientific">Paracoccus denitrificans (strain Pd 1222)</name>
    <dbReference type="NCBI Taxonomy" id="318586"/>
    <lineage>
        <taxon>Bacteria</taxon>
        <taxon>Pseudomonadati</taxon>
        <taxon>Pseudomonadota</taxon>
        <taxon>Alphaproteobacteria</taxon>
        <taxon>Rhodobacterales</taxon>
        <taxon>Paracoccaceae</taxon>
        <taxon>Paracoccus</taxon>
    </lineage>
</organism>
<proteinExistence type="inferred from homology"/>
<evidence type="ECO:0000255" key="1">
    <source>
        <dbReference type="HAMAP-Rule" id="MF_00366"/>
    </source>
</evidence>
<sequence length="118" mass="13389">MARVTVEDCVDKVPNRFDLVMLAAHRAREIAAGSPLTVDRDNDKNPVVSLREIADETQPVDDLRERMIEAQQTQIEVDEPEEDAMALLLGAEMDRPKPADEESEERMLRMMLEAQGRN</sequence>
<accession>A1B1V8</accession>
<name>RPOZ_PARDP</name>
<protein>
    <recommendedName>
        <fullName evidence="1">DNA-directed RNA polymerase subunit omega</fullName>
        <shortName evidence="1">RNAP omega subunit</shortName>
        <ecNumber evidence="1">2.7.7.6</ecNumber>
    </recommendedName>
    <alternativeName>
        <fullName evidence="1">RNA polymerase omega subunit</fullName>
    </alternativeName>
    <alternativeName>
        <fullName evidence="1">Transcriptase subunit omega</fullName>
    </alternativeName>
</protein>